<comment type="function">
    <text evidence="1 4 5 7 8">Substrate-recognition component of the cullin-RING-based CBC(fem-1) (Cul2-ElonginB-ElonginC) E3 ubiquitin-protein ligase complex of the DesCEND (destruction via C-end degrons) pathway, which recognizes a C-degron located at the extreme C terminus of target proteins, leading to their ubiquitination and degradation (By similarity). The C-degron recognized by the DesCEND pathway is usually a motif of less than ten residues and can be present in full-length proteins, truncated proteins or proteolytically cleaved forms (By similarity). Sex-determining protein; essential for the adoption of the male sexual fate in all tissues (PubMed:2317869). The CBC(fem-1) complex mediates the ubiquitination and subsequent proteasomal degradation of tra-1 (PubMed:17609115). Promotes ubiquitination and degradation of cdl-1 (PubMed:28118078). May be involved in turnover of neuronal substrates, thereby impacting synaptic acetylcholine release and neuromuscular transmission (PubMed:36336956).</text>
</comment>
<comment type="pathway">
    <text evidence="4 7">Protein modification; protein ubiquitination.</text>
</comment>
<comment type="subunit">
    <text evidence="2 3 4 6">Component of a complex containing fem-1, fem-2 and fem-3 (PubMed:23760267). Interacts with fem-2 (via N-terminus) and fem-3 (PubMed:17609115, PubMed:23760267). Component of the CBC(fem-1) E3 ubiquitin-protein ligase complex, at least composed of cul-2, elc-1, tra-1, fem-1, fem-2 and fem-3; mediates the ubiquitination and subsequent proteasomal degradation of tra-1 (PubMed:17609115). Interacts with cul-2 (PubMed:17609115). Interacts with tra-1 (PubMed:17609115). Interacts (via VHL-box motif) with elc-1 (PubMed:17609115). Interacts with sel-10 (PubMed:15306688). Interacts with ced-4 (PubMed:10764728).</text>
</comment>
<comment type="interaction">
    <interactant intactId="EBI-1998155">
        <id>P17221</id>
    </interactant>
    <interactant intactId="EBI-300574">
        <id>Q9BKS1</id>
        <label>elc-1</label>
    </interactant>
    <organismsDiffer>false</organismsDiffer>
    <experiments>3</experiments>
</comment>
<comment type="interaction">
    <interactant intactId="EBI-1998155">
        <id>P17221</id>
    </interactant>
    <interactant intactId="EBI-1998402">
        <id>P49594</id>
        <label>fem-2</label>
    </interactant>
    <organismsDiffer>false</organismsDiffer>
    <experiments>3</experiments>
</comment>
<comment type="interaction">
    <interactant intactId="EBI-1998155">
        <id>P17221</id>
    </interactant>
    <interactant intactId="EBI-445465">
        <id>P34691</id>
        <label>fem-3</label>
    </interactant>
    <organismsDiffer>false</organismsDiffer>
    <experiments>3</experiments>
</comment>
<comment type="interaction">
    <interactant intactId="EBI-1998155">
        <id>P17221</id>
    </interactant>
    <interactant intactId="EBI-323098">
        <id>Q93794</id>
        <label>sel-10</label>
    </interactant>
    <organismsDiffer>false</organismsDiffer>
    <experiments>2</experiments>
</comment>
<comment type="interaction">
    <interactant intactId="EBI-1998155">
        <id>P17221</id>
    </interactant>
    <interactant intactId="EBI-367214">
        <id>P34708-1</id>
        <label>tra-1</label>
    </interactant>
    <organismsDiffer>false</organismsDiffer>
    <experiments>2</experiments>
</comment>
<comment type="subcellular location">
    <subcellularLocation>
        <location evidence="9">Cytoplasm</location>
    </subcellularLocation>
</comment>
<comment type="alternative products">
    <event type="alternative splicing"/>
    <isoform>
        <id>P17221-1</id>
        <name>a</name>
        <sequence type="displayed"/>
    </isoform>
    <isoform>
        <id>P17221-2</id>
        <name>b</name>
        <sequence type="described" ref="VSP_015676 VSP_015677"/>
    </isoform>
</comment>
<comment type="similarity">
    <text evidence="9">Belongs to the fem-1 family.</text>
</comment>
<sequence length="656" mass="74286">MTPNGHHFRTVIYNAAAVGNLQRIKVFTINSRNDRQWIIDCFNSDQDGRYPLVIAARNGHANVVEYLLEIGADPSVRGVVEFDNENIQGTPPLWAASAAGHIEIVKLLIEKANADVNQATNTRSTPLRGACYDGHLDIVKYLLEKGADPHIPNRHGHTCLMIASYRNKVGIVEELLKTGIDVNKKTERGNTALHDAAESGNVEVVKILLKHGSVLMKDIQGVDPLMGAALSGFLDVLNVLADQMPSGIHKRDALKLLGSTLLDKKMDAMSAMNCWKQSMEVPLHADDLRLVREMETFFEPQEVYEYQREAQNIAQVELLDGNIEAQRMQALVIRERILGGAHTDVHYYLRFRGAVYCDMGQMNRCYDLWKHALELQQKHFAPLYYGTITTLQSFHETFSMSLNDFVNNHHANRNLRVRSSWVKYVFNGVCLELERAAAWTGAPLLEDTECCGKERCQHATEESEYKKLVYVAVHLVNVLERLSLPSAHIDDSDEEKEPKADVRRLMIVCHELHIPLLHHTLEERIPDSNSAELGLPKAAVLEQLLELDLDVNATDKNNDTPMHILLRAREFRKSLVRALLVRGTWLFARNRHGDVVLNVMKRMKALNHANFDDLPLGRHITLAGLVANAMRVKYPKKFVGVEEQMPLELRRFYLAH</sequence>
<gene>
    <name type="primary">fem-1</name>
    <name type="synonym">isx-1</name>
    <name type="ORF">F35D6.1</name>
</gene>
<name>FEM1_CAEEL</name>
<proteinExistence type="evidence at protein level"/>
<protein>
    <recommendedName>
        <fullName>Sex-determining protein fem-1</fullName>
    </recommendedName>
    <alternativeName>
        <fullName>Feminization of XX and XO animals protein 1</fullName>
    </alternativeName>
</protein>
<dbReference type="EMBL" id="J03172">
    <property type="protein sequence ID" value="AAA28055.1"/>
    <property type="molecule type" value="Genomic_DNA"/>
</dbReference>
<dbReference type="EMBL" id="FO080146">
    <property type="protein sequence ID" value="CCD61590.1"/>
    <property type="molecule type" value="Genomic_DNA"/>
</dbReference>
<dbReference type="EMBL" id="FO080146">
    <property type="protein sequence ID" value="CCD61591.1"/>
    <property type="molecule type" value="Genomic_DNA"/>
</dbReference>
<dbReference type="PIR" id="A34793">
    <property type="entry name" value="A34793"/>
</dbReference>
<dbReference type="RefSeq" id="NP_001379561.1">
    <molecule id="P17221-2"/>
    <property type="nucleotide sequence ID" value="NM_001392312.1"/>
</dbReference>
<dbReference type="RefSeq" id="NP_500824.1">
    <molecule id="P17221-1"/>
    <property type="nucleotide sequence ID" value="NM_068423.7"/>
</dbReference>
<dbReference type="RefSeq" id="NP_500825.1">
    <property type="nucleotide sequence ID" value="NM_068424.3"/>
</dbReference>
<dbReference type="SMR" id="P17221"/>
<dbReference type="BioGRID" id="42457">
    <property type="interactions" value="12"/>
</dbReference>
<dbReference type="ComplexPortal" id="CPX-3385">
    <property type="entry name" value="Fem-2 phosphatase complex"/>
</dbReference>
<dbReference type="FunCoup" id="P17221">
    <property type="interactions" value="2180"/>
</dbReference>
<dbReference type="IntAct" id="P17221">
    <property type="interactions" value="7"/>
</dbReference>
<dbReference type="STRING" id="6239.F35D6.1a.1"/>
<dbReference type="PaxDb" id="6239-F35D6.1a"/>
<dbReference type="PeptideAtlas" id="P17221"/>
<dbReference type="EnsemblMetazoa" id="F35D6.1a.1">
    <molecule id="P17221-1"/>
    <property type="protein sequence ID" value="F35D6.1a.1"/>
    <property type="gene ID" value="WBGene00001411"/>
</dbReference>
<dbReference type="EnsemblMetazoa" id="F35D6.1b.1">
    <molecule id="P17221-2"/>
    <property type="protein sequence ID" value="F35D6.1b.1"/>
    <property type="gene ID" value="WBGene00001411"/>
</dbReference>
<dbReference type="GeneID" id="177335"/>
<dbReference type="KEGG" id="cel:CELE_F35D6.1"/>
<dbReference type="UCSC" id="F35D6.1a">
    <molecule id="P17221-1"/>
    <property type="organism name" value="c. elegans"/>
</dbReference>
<dbReference type="AGR" id="WB:WBGene00001411"/>
<dbReference type="CTD" id="37344"/>
<dbReference type="WormBase" id="F35D6.1a">
    <molecule id="P17221-1"/>
    <property type="protein sequence ID" value="CE07175"/>
    <property type="gene ID" value="WBGene00001411"/>
    <property type="gene designation" value="fem-1"/>
</dbReference>
<dbReference type="WormBase" id="F35D6.1b">
    <molecule id="P17221-2"/>
    <property type="protein sequence ID" value="CE28299"/>
    <property type="gene ID" value="WBGene00001411"/>
    <property type="gene designation" value="fem-1"/>
</dbReference>
<dbReference type="eggNOG" id="KOG0508">
    <property type="taxonomic scope" value="Eukaryota"/>
</dbReference>
<dbReference type="GeneTree" id="ENSGT00940000161115"/>
<dbReference type="HOGENOM" id="CLU_020042_1_0_1"/>
<dbReference type="InParanoid" id="P17221"/>
<dbReference type="OMA" id="FMTTEWR"/>
<dbReference type="OrthoDB" id="10071877at2759"/>
<dbReference type="PhylomeDB" id="P17221"/>
<dbReference type="Reactome" id="R-CEL-8951664">
    <property type="pathway name" value="Neddylation"/>
</dbReference>
<dbReference type="SignaLink" id="P17221"/>
<dbReference type="UniPathway" id="UPA00143"/>
<dbReference type="PRO" id="PR:P17221"/>
<dbReference type="Proteomes" id="UP000001940">
    <property type="component" value="Chromosome IV"/>
</dbReference>
<dbReference type="Bgee" id="WBGene00001411">
    <property type="expression patterns" value="Expressed in germ line (C elegans) and 4 other cell types or tissues"/>
</dbReference>
<dbReference type="GO" id="GO:0031462">
    <property type="term" value="C:Cul2-RING ubiquitin ligase complex"/>
    <property type="evidence" value="ECO:0000314"/>
    <property type="project" value="ComplexPortal"/>
</dbReference>
<dbReference type="GO" id="GO:0005737">
    <property type="term" value="C:cytoplasm"/>
    <property type="evidence" value="ECO:0007669"/>
    <property type="project" value="UniProtKB-SubCell"/>
</dbReference>
<dbReference type="GO" id="GO:0008287">
    <property type="term" value="C:protein serine/threonine phosphatase complex"/>
    <property type="evidence" value="ECO:0000314"/>
    <property type="project" value="ComplexPortal"/>
</dbReference>
<dbReference type="GO" id="GO:0032991">
    <property type="term" value="C:protein-containing complex"/>
    <property type="evidence" value="ECO:0000315"/>
    <property type="project" value="UniProtKB"/>
</dbReference>
<dbReference type="GO" id="GO:0000151">
    <property type="term" value="C:ubiquitin ligase complex"/>
    <property type="evidence" value="ECO:0000318"/>
    <property type="project" value="GO_Central"/>
</dbReference>
<dbReference type="GO" id="GO:0019903">
    <property type="term" value="F:protein phosphatase binding"/>
    <property type="evidence" value="ECO:0000353"/>
    <property type="project" value="UniProtKB"/>
</dbReference>
<dbReference type="GO" id="GO:1990756">
    <property type="term" value="F:ubiquitin-like ligase-substrate adaptor activity"/>
    <property type="evidence" value="ECO:0000318"/>
    <property type="project" value="GO_Central"/>
</dbReference>
<dbReference type="GO" id="GO:0030154">
    <property type="term" value="P:cell differentiation"/>
    <property type="evidence" value="ECO:0007669"/>
    <property type="project" value="UniProtKB-KW"/>
</dbReference>
<dbReference type="GO" id="GO:0019100">
    <property type="term" value="P:male germ-line sex determination"/>
    <property type="evidence" value="ECO:0000315"/>
    <property type="project" value="WormBase"/>
</dbReference>
<dbReference type="GO" id="GO:0030238">
    <property type="term" value="P:male sex determination"/>
    <property type="evidence" value="ECO:0000315"/>
    <property type="project" value="ComplexPortal"/>
</dbReference>
<dbReference type="GO" id="GO:0019102">
    <property type="term" value="P:male somatic sex determination"/>
    <property type="evidence" value="ECO:0000315"/>
    <property type="project" value="WormBase"/>
</dbReference>
<dbReference type="GO" id="GO:0042006">
    <property type="term" value="P:masculinization of hermaphroditic germ-line"/>
    <property type="evidence" value="ECO:0000315"/>
    <property type="project" value="WormBase"/>
</dbReference>
<dbReference type="GO" id="GO:0043161">
    <property type="term" value="P:proteasome-mediated ubiquitin-dependent protein catabolic process"/>
    <property type="evidence" value="ECO:0000314"/>
    <property type="project" value="WormBase"/>
</dbReference>
<dbReference type="GO" id="GO:0016567">
    <property type="term" value="P:protein ubiquitination"/>
    <property type="evidence" value="ECO:0007669"/>
    <property type="project" value="UniProtKB-UniPathway"/>
</dbReference>
<dbReference type="GO" id="GO:0010468">
    <property type="term" value="P:regulation of gene expression"/>
    <property type="evidence" value="ECO:0000316"/>
    <property type="project" value="UniProtKB"/>
</dbReference>
<dbReference type="GO" id="GO:1905936">
    <property type="term" value="P:regulation of germ cell proliferation"/>
    <property type="evidence" value="ECO:0000316"/>
    <property type="project" value="UniProtKB"/>
</dbReference>
<dbReference type="GO" id="GO:0007530">
    <property type="term" value="P:sex determination"/>
    <property type="evidence" value="ECO:0000315"/>
    <property type="project" value="ComplexPortal"/>
</dbReference>
<dbReference type="GO" id="GO:0007548">
    <property type="term" value="P:sex differentiation"/>
    <property type="evidence" value="ECO:0007669"/>
    <property type="project" value="UniProtKB-KW"/>
</dbReference>
<dbReference type="FunFam" id="1.25.40.20:FF:000264">
    <property type="entry name" value="Fem-1 homolog B"/>
    <property type="match status" value="1"/>
</dbReference>
<dbReference type="Gene3D" id="1.25.40.20">
    <property type="entry name" value="Ankyrin repeat-containing domain"/>
    <property type="match status" value="3"/>
</dbReference>
<dbReference type="Gene3D" id="1.25.40.10">
    <property type="entry name" value="Tetratricopeptide repeat domain"/>
    <property type="match status" value="1"/>
</dbReference>
<dbReference type="InterPro" id="IPR002110">
    <property type="entry name" value="Ankyrin_rpt"/>
</dbReference>
<dbReference type="InterPro" id="IPR036770">
    <property type="entry name" value="Ankyrin_rpt-contain_sf"/>
</dbReference>
<dbReference type="InterPro" id="IPR011990">
    <property type="entry name" value="TPR-like_helical_dom_sf"/>
</dbReference>
<dbReference type="PANTHER" id="PTHR24173">
    <property type="entry name" value="ANKYRIN REPEAT CONTAINING"/>
    <property type="match status" value="1"/>
</dbReference>
<dbReference type="PANTHER" id="PTHR24173:SF85">
    <property type="entry name" value="PROTEIN FEM-1 HOMOLOG CG6966"/>
    <property type="match status" value="1"/>
</dbReference>
<dbReference type="Pfam" id="PF00023">
    <property type="entry name" value="Ank"/>
    <property type="match status" value="1"/>
</dbReference>
<dbReference type="Pfam" id="PF12796">
    <property type="entry name" value="Ank_2"/>
    <property type="match status" value="2"/>
</dbReference>
<dbReference type="SMART" id="SM00248">
    <property type="entry name" value="ANK"/>
    <property type="match status" value="7"/>
</dbReference>
<dbReference type="SUPFAM" id="SSF48403">
    <property type="entry name" value="Ankyrin repeat"/>
    <property type="match status" value="2"/>
</dbReference>
<dbReference type="PROSITE" id="PS50297">
    <property type="entry name" value="ANK_REP_REGION"/>
    <property type="match status" value="2"/>
</dbReference>
<dbReference type="PROSITE" id="PS50088">
    <property type="entry name" value="ANK_REPEAT"/>
    <property type="match status" value="4"/>
</dbReference>
<keyword id="KW-0025">Alternative splicing</keyword>
<keyword id="KW-0040">ANK repeat</keyword>
<keyword id="KW-0963">Cytoplasm</keyword>
<keyword id="KW-0217">Developmental protein</keyword>
<keyword id="KW-0221">Differentiation</keyword>
<keyword id="KW-0597">Phosphoprotein</keyword>
<keyword id="KW-1185">Reference proteome</keyword>
<keyword id="KW-0677">Repeat</keyword>
<keyword id="KW-0726">Sexual differentiation</keyword>
<keyword id="KW-0802">TPR repeat</keyword>
<keyword id="KW-0833">Ubl conjugation pathway</keyword>
<accession>P17221</accession>
<accession>Q95ZU3</accession>
<reference key="1">
    <citation type="journal article" date="1990" name="Cell">
        <title>The product of fem-1, a nematode sex-determining gene, contains a motif found in cell cycle control proteins and receptors for cell-cell interactions.</title>
        <authorList>
            <person name="Spence A.M."/>
            <person name="Coulson A."/>
            <person name="Hodgkin J."/>
        </authorList>
    </citation>
    <scope>NUCLEOTIDE SEQUENCE [GENOMIC DNA] (ISOFORM A)</scope>
    <scope>FUNCTION</scope>
    <source>
        <strain>Bristol N2</strain>
    </source>
</reference>
<reference key="2">
    <citation type="journal article" date="1998" name="Science">
        <title>Genome sequence of the nematode C. elegans: a platform for investigating biology.</title>
        <authorList>
            <consortium name="The C. elegans sequencing consortium"/>
        </authorList>
    </citation>
    <scope>NUCLEOTIDE SEQUENCE [LARGE SCALE GENOMIC DNA]</scope>
    <scope>ALTERNATIVE SPLICING</scope>
    <source>
        <strain>Bristol N2</strain>
    </source>
</reference>
<reference key="3">
    <citation type="journal article" date="2000" name="J. Biol. Chem.">
        <title>The Caenorhabditis elegans sex determination protein FEM-1 is a CED-3 substrate that associates with CED-4 and mediates apoptosis in mammalian cells.</title>
        <authorList>
            <person name="Chan S.L."/>
            <person name="Yee K.S."/>
            <person name="Tan K.M."/>
            <person name="Yu V.C."/>
        </authorList>
    </citation>
    <scope>INTERACTION WITH CED-4</scope>
    <scope>PROTEOLYTIC CLEAVAGE</scope>
    <scope>MUTAGENESIS OF ASP-320 AND ASP-344</scope>
</reference>
<reference key="4">
    <citation type="journal article" date="2004" name="Proc. Natl. Acad. Sci. U.S.A.">
        <title>The Caenorhabditis elegans F-box protein SEL-10 promotes female development and may target FEM-1 and FEM-3 for degradation by the proteasome.</title>
        <authorList>
            <person name="Jaeger S."/>
            <person name="Schwartz H.T."/>
            <person name="Horvitz H.R."/>
            <person name="Conradt B."/>
        </authorList>
    </citation>
    <scope>INTERACTION WITH SEL-10</scope>
</reference>
<reference key="5">
    <citation type="journal article" date="2007" name="Dev. Cell">
        <title>A CUL-2 ubiquitin ligase containing three FEM proteins degrades TRA-1 to regulate C. elegans sex determination.</title>
        <authorList>
            <person name="Starostina N.G."/>
            <person name="Lim J.M."/>
            <person name="Schvarzstein M."/>
            <person name="Wells L."/>
            <person name="Spence A.M."/>
            <person name="Kipreos E.T."/>
        </authorList>
    </citation>
    <scope>FUNCTION</scope>
    <scope>IDENTIFICATION IN THE CBC(FEM-1) COMPLEX</scope>
    <scope>INTERACTION WITH TRA-1; CUL-2; ELC-1; FEM-2 AND FEM-3</scope>
    <scope>MUTAGENESIS OF 541-LEU--ASP-548</scope>
</reference>
<reference key="6">
    <citation type="journal article" date="2013" name="J. Biol. Chem.">
        <title>Structural insight into Caenorhabditis elegans sex-determining protein FEM-2.</title>
        <authorList>
            <person name="Zhang Y."/>
            <person name="Zhao H."/>
            <person name="Wang J."/>
            <person name="Ge J."/>
            <person name="Li Y."/>
            <person name="Gu J."/>
            <person name="Li P."/>
            <person name="Feng Y."/>
            <person name="Yang M."/>
        </authorList>
    </citation>
    <scope>IDENTIFICATION IN A COMPLEX WITH FEM-2 AND FEM-3</scope>
    <scope>INTERACTION WITH FEM-2</scope>
</reference>
<reference key="7">
    <citation type="journal article" date="2017" name="Cell Cycle">
        <title>FEM1 proteins are ancient regulators of SLBP degradation.</title>
        <authorList>
            <person name="Dankert J.F."/>
            <person name="Pagan J.K."/>
            <person name="Starostina N.G."/>
            <person name="Kipreos E.T."/>
            <person name="Pagano M."/>
        </authorList>
    </citation>
    <scope>FUNCTION</scope>
    <scope>PATHWAY</scope>
</reference>
<reference key="8">
    <citation type="journal article" date="2023" name="Hum. Mol. Genet.">
        <title>A novel de novo FEM1C variant is linked to neurodevelopmental disorder with absent speech, pyramidal signs, and limb ataxia.</title>
        <authorList>
            <person name="Dubey A.A."/>
            <person name="Krygier M."/>
            <person name="Szulc N.A."/>
            <person name="Rutkowska K."/>
            <person name="Kosinska J."/>
            <person name="Pollak A."/>
            <person name="Rydzanicz M."/>
            <person name="Kmiec T."/>
            <person name="Mazurkiewicz-Beldzinska M."/>
            <person name="Pokrzywa W."/>
            <person name="Ploski R."/>
        </authorList>
    </citation>
    <scope>FUNCTION</scope>
    <scope>MUTAGENESIS OF ASP-133</scope>
</reference>
<feature type="chain" id="PRO_0000067058" description="Sex-determining protein fem-1">
    <location>
        <begin position="1"/>
        <end position="656"/>
    </location>
</feature>
<feature type="repeat" description="ANK 1">
    <location>
        <begin position="47"/>
        <end position="76"/>
    </location>
</feature>
<feature type="repeat" description="ANK 2">
    <location>
        <begin position="88"/>
        <end position="118"/>
    </location>
</feature>
<feature type="repeat" description="ANK 3">
    <location>
        <begin position="122"/>
        <end position="151"/>
    </location>
</feature>
<feature type="repeat" description="ANK 4">
    <location>
        <begin position="155"/>
        <end position="184"/>
    </location>
</feature>
<feature type="repeat" description="ANK 5">
    <location>
        <begin position="188"/>
        <end position="217"/>
    </location>
</feature>
<feature type="repeat" description="ANK 6">
    <location>
        <begin position="220"/>
        <end position="250"/>
    </location>
</feature>
<feature type="repeat" description="TPR">
    <location>
        <begin position="346"/>
        <end position="379"/>
    </location>
</feature>
<feature type="repeat" description="ANK 7">
    <location>
        <begin position="557"/>
        <end position="588"/>
    </location>
</feature>
<feature type="short sequence motif" description="VHL-box" evidence="4">
    <location>
        <begin position="541"/>
        <end position="548"/>
    </location>
</feature>
<feature type="site" description="Cleavage; by ced-3" evidence="2">
    <location>
        <begin position="320"/>
        <end position="321"/>
    </location>
</feature>
<feature type="splice variant" id="VSP_015676" description="In isoform b." evidence="9">
    <original>QGTPPLWAASAAGHIEI</original>
    <variation>LFRRNTSFVGCLRCWTH</variation>
    <location>
        <begin position="88"/>
        <end position="104"/>
    </location>
</feature>
<feature type="splice variant" id="VSP_015677" description="In isoform b." evidence="9">
    <location>
        <begin position="105"/>
        <end position="656"/>
    </location>
</feature>
<feature type="mutagenesis site" description="Locomotor defects due to neuronal dysfunction. Difficulty performing omega bends but no defects in reversals. Does not affect fertility." evidence="8">
    <original>D</original>
    <variation>H</variation>
    <location>
        <position position="133"/>
    </location>
</feature>
<feature type="mutagenesis site" description="No ced-3-mediated cleavage." evidence="2">
    <original>D</original>
    <variation>A</variation>
    <location>
        <position position="320"/>
    </location>
</feature>
<feature type="mutagenesis site" description="Does not affect ced-3-mediated cleavage." evidence="2">
    <original>D</original>
    <variation>A</variation>
    <location>
        <position position="344"/>
    </location>
</feature>
<feature type="mutagenesis site" description="Loss of interaction with elc-1." evidence="4">
    <original>LEQLLELD</original>
    <variation>SSSSSSSS</variation>
    <location>
        <begin position="541"/>
        <end position="548"/>
    </location>
</feature>
<organism>
    <name type="scientific">Caenorhabditis elegans</name>
    <dbReference type="NCBI Taxonomy" id="6239"/>
    <lineage>
        <taxon>Eukaryota</taxon>
        <taxon>Metazoa</taxon>
        <taxon>Ecdysozoa</taxon>
        <taxon>Nematoda</taxon>
        <taxon>Chromadorea</taxon>
        <taxon>Rhabditida</taxon>
        <taxon>Rhabditina</taxon>
        <taxon>Rhabditomorpha</taxon>
        <taxon>Rhabditoidea</taxon>
        <taxon>Rhabditidae</taxon>
        <taxon>Peloderinae</taxon>
        <taxon>Caenorhabditis</taxon>
    </lineage>
</organism>
<evidence type="ECO:0000250" key="1">
    <source>
        <dbReference type="UniProtKB" id="Q9BSK4"/>
    </source>
</evidence>
<evidence type="ECO:0000269" key="2">
    <source>
    </source>
</evidence>
<evidence type="ECO:0000269" key="3">
    <source>
    </source>
</evidence>
<evidence type="ECO:0000269" key="4">
    <source>
    </source>
</evidence>
<evidence type="ECO:0000269" key="5">
    <source>
    </source>
</evidence>
<evidence type="ECO:0000269" key="6">
    <source>
    </source>
</evidence>
<evidence type="ECO:0000269" key="7">
    <source>
    </source>
</evidence>
<evidence type="ECO:0000269" key="8">
    <source>
    </source>
</evidence>
<evidence type="ECO:0000305" key="9"/>